<reference key="1">
    <citation type="journal article" date="2007" name="Environ. Microbiol.">
        <title>Whole-genome analysis of the ammonia-oxidizing bacterium, Nitrosomonas eutropha C91: implications for niche adaptation.</title>
        <authorList>
            <person name="Stein L.Y."/>
            <person name="Arp D.J."/>
            <person name="Berube P.M."/>
            <person name="Chain P.S."/>
            <person name="Hauser L."/>
            <person name="Jetten M.S."/>
            <person name="Klotz M.G."/>
            <person name="Larimer F.W."/>
            <person name="Norton J.M."/>
            <person name="Op den Camp H.J.M."/>
            <person name="Shin M."/>
            <person name="Wei X."/>
        </authorList>
    </citation>
    <scope>NUCLEOTIDE SEQUENCE [LARGE SCALE GENOMIC DNA]</scope>
    <source>
        <strain>DSM 101675 / C91 / Nm57</strain>
    </source>
</reference>
<feature type="chain" id="PRO_1000061813" description="Ribosomal RNA large subunit methyltransferase H">
    <location>
        <begin position="1"/>
        <end position="155"/>
    </location>
</feature>
<feature type="binding site" evidence="1">
    <location>
        <position position="72"/>
    </location>
    <ligand>
        <name>S-adenosyl-L-methionine</name>
        <dbReference type="ChEBI" id="CHEBI:59789"/>
    </ligand>
</feature>
<feature type="binding site" evidence="1">
    <location>
        <position position="103"/>
    </location>
    <ligand>
        <name>S-adenosyl-L-methionine</name>
        <dbReference type="ChEBI" id="CHEBI:59789"/>
    </ligand>
</feature>
<feature type="binding site" evidence="1">
    <location>
        <begin position="122"/>
        <end position="127"/>
    </location>
    <ligand>
        <name>S-adenosyl-L-methionine</name>
        <dbReference type="ChEBI" id="CHEBI:59789"/>
    </ligand>
</feature>
<protein>
    <recommendedName>
        <fullName evidence="1">Ribosomal RNA large subunit methyltransferase H</fullName>
        <ecNumber evidence="1">2.1.1.177</ecNumber>
    </recommendedName>
    <alternativeName>
        <fullName evidence="1">23S rRNA (pseudouridine1915-N3)-methyltransferase</fullName>
    </alternativeName>
    <alternativeName>
        <fullName evidence="1">23S rRNA m3Psi1915 methyltransferase</fullName>
    </alternativeName>
    <alternativeName>
        <fullName evidence="1">rRNA (pseudouridine-N3-)-methyltransferase RlmH</fullName>
    </alternativeName>
</protein>
<name>RLMH_NITEC</name>
<keyword id="KW-0963">Cytoplasm</keyword>
<keyword id="KW-0489">Methyltransferase</keyword>
<keyword id="KW-0698">rRNA processing</keyword>
<keyword id="KW-0949">S-adenosyl-L-methionine</keyword>
<keyword id="KW-0808">Transferase</keyword>
<organism>
    <name type="scientific">Nitrosomonas eutropha (strain DSM 101675 / C91 / Nm57)</name>
    <dbReference type="NCBI Taxonomy" id="335283"/>
    <lineage>
        <taxon>Bacteria</taxon>
        <taxon>Pseudomonadati</taxon>
        <taxon>Pseudomonadota</taxon>
        <taxon>Betaproteobacteria</taxon>
        <taxon>Nitrosomonadales</taxon>
        <taxon>Nitrosomonadaceae</taxon>
        <taxon>Nitrosomonas</taxon>
    </lineage>
</organism>
<dbReference type="EC" id="2.1.1.177" evidence="1"/>
<dbReference type="EMBL" id="CP000450">
    <property type="protein sequence ID" value="ABI59855.1"/>
    <property type="molecule type" value="Genomic_DNA"/>
</dbReference>
<dbReference type="RefSeq" id="WP_011634661.1">
    <property type="nucleotide sequence ID" value="NC_008344.1"/>
</dbReference>
<dbReference type="SMR" id="Q0AFM7"/>
<dbReference type="STRING" id="335283.Neut_1612"/>
<dbReference type="KEGG" id="net:Neut_1612"/>
<dbReference type="eggNOG" id="COG1576">
    <property type="taxonomic scope" value="Bacteria"/>
</dbReference>
<dbReference type="HOGENOM" id="CLU_100552_1_0_4"/>
<dbReference type="OrthoDB" id="9806643at2"/>
<dbReference type="Proteomes" id="UP000001966">
    <property type="component" value="Chromosome"/>
</dbReference>
<dbReference type="GO" id="GO:0005737">
    <property type="term" value="C:cytoplasm"/>
    <property type="evidence" value="ECO:0007669"/>
    <property type="project" value="UniProtKB-SubCell"/>
</dbReference>
<dbReference type="GO" id="GO:0070038">
    <property type="term" value="F:rRNA (pseudouridine-N3-)-methyltransferase activity"/>
    <property type="evidence" value="ECO:0007669"/>
    <property type="project" value="UniProtKB-UniRule"/>
</dbReference>
<dbReference type="CDD" id="cd18081">
    <property type="entry name" value="RlmH-like"/>
    <property type="match status" value="1"/>
</dbReference>
<dbReference type="Gene3D" id="3.40.1280.10">
    <property type="match status" value="1"/>
</dbReference>
<dbReference type="HAMAP" id="MF_00658">
    <property type="entry name" value="23SrRNA_methyltr_H"/>
    <property type="match status" value="1"/>
</dbReference>
<dbReference type="InterPro" id="IPR029028">
    <property type="entry name" value="Alpha/beta_knot_MTases"/>
</dbReference>
<dbReference type="InterPro" id="IPR003742">
    <property type="entry name" value="RlmH-like"/>
</dbReference>
<dbReference type="InterPro" id="IPR029026">
    <property type="entry name" value="tRNA_m1G_MTases_N"/>
</dbReference>
<dbReference type="NCBIfam" id="NF000986">
    <property type="entry name" value="PRK00103.1-4"/>
    <property type="match status" value="1"/>
</dbReference>
<dbReference type="NCBIfam" id="TIGR00246">
    <property type="entry name" value="tRNA_RlmH_YbeA"/>
    <property type="match status" value="1"/>
</dbReference>
<dbReference type="PANTHER" id="PTHR33603">
    <property type="entry name" value="METHYLTRANSFERASE"/>
    <property type="match status" value="1"/>
</dbReference>
<dbReference type="PANTHER" id="PTHR33603:SF1">
    <property type="entry name" value="RIBOSOMAL RNA LARGE SUBUNIT METHYLTRANSFERASE H"/>
    <property type="match status" value="1"/>
</dbReference>
<dbReference type="Pfam" id="PF02590">
    <property type="entry name" value="SPOUT_MTase"/>
    <property type="match status" value="1"/>
</dbReference>
<dbReference type="PIRSF" id="PIRSF004505">
    <property type="entry name" value="MT_bac"/>
    <property type="match status" value="1"/>
</dbReference>
<dbReference type="SUPFAM" id="SSF75217">
    <property type="entry name" value="alpha/beta knot"/>
    <property type="match status" value="1"/>
</dbReference>
<gene>
    <name evidence="1" type="primary">rlmH</name>
    <name type="ordered locus">Neut_1612</name>
</gene>
<sequence>MKLHILAVGNKMPDWIKKGYTEYSQRMPKEAEMQLVEIKPEKRIGKKTEQLLQAESERIRIALPPGCHIVVLDESGKQATTVRLAELMTNWRESGRDVTFIIGGADGLHRDIKQIAHEKLALSTMTLPHGLARVLLAEQLYRAFSITRNHPYHRA</sequence>
<comment type="function">
    <text evidence="1">Specifically methylates the pseudouridine at position 1915 (m3Psi1915) in 23S rRNA.</text>
</comment>
<comment type="catalytic activity">
    <reaction evidence="1">
        <text>pseudouridine(1915) in 23S rRNA + S-adenosyl-L-methionine = N(3)-methylpseudouridine(1915) in 23S rRNA + S-adenosyl-L-homocysteine + H(+)</text>
        <dbReference type="Rhea" id="RHEA:42752"/>
        <dbReference type="Rhea" id="RHEA-COMP:10221"/>
        <dbReference type="Rhea" id="RHEA-COMP:10222"/>
        <dbReference type="ChEBI" id="CHEBI:15378"/>
        <dbReference type="ChEBI" id="CHEBI:57856"/>
        <dbReference type="ChEBI" id="CHEBI:59789"/>
        <dbReference type="ChEBI" id="CHEBI:65314"/>
        <dbReference type="ChEBI" id="CHEBI:74486"/>
        <dbReference type="EC" id="2.1.1.177"/>
    </reaction>
</comment>
<comment type="subunit">
    <text evidence="1">Homodimer.</text>
</comment>
<comment type="subcellular location">
    <subcellularLocation>
        <location evidence="1">Cytoplasm</location>
    </subcellularLocation>
</comment>
<comment type="similarity">
    <text evidence="1">Belongs to the RNA methyltransferase RlmH family.</text>
</comment>
<evidence type="ECO:0000255" key="1">
    <source>
        <dbReference type="HAMAP-Rule" id="MF_00658"/>
    </source>
</evidence>
<accession>Q0AFM7</accession>
<proteinExistence type="inferred from homology"/>